<dbReference type="EMBL" id="AY651731">
    <property type="protein sequence ID" value="AAT73562.2"/>
    <property type="status" value="ALT_FRAME"/>
    <property type="molecule type" value="Genomic_RNA"/>
</dbReference>
<dbReference type="SMR" id="Q6DNM1"/>
<dbReference type="GO" id="GO:0042025">
    <property type="term" value="C:host cell nucleus"/>
    <property type="evidence" value="ECO:0007669"/>
    <property type="project" value="UniProtKB-SubCell"/>
</dbReference>
<dbReference type="GO" id="GO:0044423">
    <property type="term" value="C:virion component"/>
    <property type="evidence" value="ECO:0007669"/>
    <property type="project" value="UniProtKB-KW"/>
</dbReference>
<dbReference type="GO" id="GO:0003723">
    <property type="term" value="F:RNA binding"/>
    <property type="evidence" value="ECO:0007669"/>
    <property type="project" value="InterPro"/>
</dbReference>
<dbReference type="GO" id="GO:0006370">
    <property type="term" value="P:7-methylguanosine mRNA capping"/>
    <property type="evidence" value="ECO:0007669"/>
    <property type="project" value="UniProtKB-KW"/>
</dbReference>
<dbReference type="GO" id="GO:0075526">
    <property type="term" value="P:cap snatching"/>
    <property type="evidence" value="ECO:0007669"/>
    <property type="project" value="UniProtKB-KW"/>
</dbReference>
<dbReference type="GO" id="GO:0006351">
    <property type="term" value="P:DNA-templated transcription"/>
    <property type="evidence" value="ECO:0007669"/>
    <property type="project" value="InterPro"/>
</dbReference>
<dbReference type="GO" id="GO:0039657">
    <property type="term" value="P:symbiont-mediated suppression of host gene expression"/>
    <property type="evidence" value="ECO:0007669"/>
    <property type="project" value="UniProtKB-KW"/>
</dbReference>
<dbReference type="GO" id="GO:0039523">
    <property type="term" value="P:symbiont-mediated suppression of host mRNA transcription via inhibition of RNA polymerase II activity"/>
    <property type="evidence" value="ECO:0007669"/>
    <property type="project" value="UniProtKB-KW"/>
</dbReference>
<dbReference type="GO" id="GO:0039694">
    <property type="term" value="P:viral RNA genome replication"/>
    <property type="evidence" value="ECO:0007669"/>
    <property type="project" value="InterPro"/>
</dbReference>
<dbReference type="FunFam" id="3.30.30.90:FF:000001">
    <property type="entry name" value="Polymerase basic protein 2"/>
    <property type="match status" value="1"/>
</dbReference>
<dbReference type="Gene3D" id="3.30.30.90">
    <property type="entry name" value="Polymerase Basic Protein 2, C-terminal domain"/>
    <property type="match status" value="1"/>
</dbReference>
<dbReference type="HAMAP" id="MF_04062">
    <property type="entry name" value="INV_PB2"/>
    <property type="match status" value="1"/>
</dbReference>
<dbReference type="InterPro" id="IPR049110">
    <property type="entry name" value="Flu_PB2_2nd"/>
</dbReference>
<dbReference type="InterPro" id="IPR049114">
    <property type="entry name" value="Flu_PB2_6th"/>
</dbReference>
<dbReference type="InterPro" id="IPR049115">
    <property type="entry name" value="Flu_PB2_C"/>
</dbReference>
<dbReference type="InterPro" id="IPR048298">
    <property type="entry name" value="Flu_PB2_CAP-bd"/>
</dbReference>
<dbReference type="InterPro" id="IPR049111">
    <property type="entry name" value="Flu_PB2_middle"/>
</dbReference>
<dbReference type="InterPro" id="IPR049106">
    <property type="entry name" value="Flu_PB2_N"/>
</dbReference>
<dbReference type="InterPro" id="IPR001591">
    <property type="entry name" value="INV_PB2"/>
</dbReference>
<dbReference type="InterPro" id="IPR049113">
    <property type="entry name" value="PB2_helical"/>
</dbReference>
<dbReference type="InterPro" id="IPR037258">
    <property type="entry name" value="PDB2_C"/>
</dbReference>
<dbReference type="Pfam" id="PF20947">
    <property type="entry name" value="Flu_PB2_1st"/>
    <property type="match status" value="1"/>
</dbReference>
<dbReference type="Pfam" id="PF20948">
    <property type="entry name" value="Flu_PB2_2nd"/>
    <property type="match status" value="1"/>
</dbReference>
<dbReference type="Pfam" id="PF20949">
    <property type="entry name" value="Flu_PB2_3rd"/>
    <property type="match status" value="1"/>
</dbReference>
<dbReference type="Pfam" id="PF20950">
    <property type="entry name" value="Flu_PB2_4th"/>
    <property type="match status" value="1"/>
</dbReference>
<dbReference type="Pfam" id="PF00604">
    <property type="entry name" value="Flu_PB2_5th"/>
    <property type="match status" value="1"/>
</dbReference>
<dbReference type="Pfam" id="PF20951">
    <property type="entry name" value="Flu_PB2_6th"/>
    <property type="match status" value="1"/>
</dbReference>
<dbReference type="Pfam" id="PF20952">
    <property type="entry name" value="Flu_PB2_7th"/>
    <property type="match status" value="1"/>
</dbReference>
<dbReference type="SUPFAM" id="SSF160453">
    <property type="entry name" value="PB2 C-terminal domain-like"/>
    <property type="match status" value="1"/>
</dbReference>
<name>PB2_I02A2</name>
<gene>
    <name evidence="1" type="primary">PB2</name>
</gene>
<organismHost>
    <name type="scientific">Aves</name>
    <dbReference type="NCBI Taxonomy" id="8782"/>
</organismHost>
<organismHost>
    <name type="scientific">Felis catus</name>
    <name type="common">Cat</name>
    <name type="synonym">Felis silvestris catus</name>
    <dbReference type="NCBI Taxonomy" id="9685"/>
</organismHost>
<organismHost>
    <name type="scientific">Homo sapiens</name>
    <name type="common">Human</name>
    <dbReference type="NCBI Taxonomy" id="9606"/>
</organismHost>
<organismHost>
    <name type="scientific">Panthera pardus</name>
    <name type="common">Leopard</name>
    <name type="synonym">Felis pardus</name>
    <dbReference type="NCBI Taxonomy" id="9691"/>
</organismHost>
<organismHost>
    <name type="scientific">Panthera tigris</name>
    <name type="common">Tiger</name>
    <dbReference type="NCBI Taxonomy" id="9694"/>
</organismHost>
<organismHost>
    <name type="scientific">Sus scrofa</name>
    <name type="common">Pig</name>
    <dbReference type="NCBI Taxonomy" id="9823"/>
</organismHost>
<proteinExistence type="inferred from homology"/>
<reference key="1">
    <citation type="journal article" date="2004" name="Nature">
        <title>Genesis of a highly pathogenic and potentially pandemic H5N1 influenza virus in eastern Asia.</title>
        <authorList>
            <person name="Li K.S."/>
            <person name="Guan Y."/>
            <person name="Wang J."/>
            <person name="Smith G.J.D."/>
            <person name="Xu K.M."/>
            <person name="Duan L."/>
            <person name="Rahardjo A.P."/>
            <person name="Puthavathana P."/>
            <person name="Buranathai C."/>
            <person name="Nguyen T.D."/>
            <person name="Estoepangestie A.T.S."/>
            <person name="Chaisingh A."/>
            <person name="Auewarakul P."/>
            <person name="Long H.T."/>
            <person name="Hanh N.T.H."/>
            <person name="Webby R.J."/>
            <person name="Poon L.L.M."/>
            <person name="Chen H."/>
            <person name="Shortridge K.F."/>
            <person name="Yuen K.Y."/>
            <person name="Webster R.G."/>
            <person name="Peiris J.S.M."/>
        </authorList>
    </citation>
    <scope>NUCLEOTIDE SEQUENCE [GENOMIC RNA]</scope>
</reference>
<reference key="2">
    <citation type="submission" date="2008-03" db="EMBL/GenBank/DDBJ databases">
        <authorList>
            <person name="Li K.S."/>
            <person name="Guan Y."/>
            <person name="Wang J."/>
            <person name="Smith G.J.D."/>
            <person name="Xu K.M."/>
            <person name="Duan L."/>
            <person name="Rahardjo A.P."/>
            <person name="Puthavathana P."/>
            <person name="Buranathai C."/>
            <person name="Nguyen T.D."/>
            <person name="Estoepangestie A.T.S."/>
            <person name="Chaisingh A."/>
            <person name="Auewarakul P."/>
            <person name="Long H.T."/>
            <person name="Hanh N.T.H."/>
            <person name="Lim W."/>
            <person name="Webby R.J."/>
            <person name="Poon L.L.M."/>
            <person name="Chen H."/>
            <person name="Shortridge K.F."/>
            <person name="Yuen K.Y."/>
            <person name="Webster R.G."/>
            <person name="Peiris J.S.M."/>
        </authorList>
    </citation>
    <scope>SEQUENCE REVISION</scope>
</reference>
<accession>Q6DNM1</accession>
<protein>
    <recommendedName>
        <fullName evidence="1">Polymerase basic protein 2</fullName>
    </recommendedName>
    <alternativeName>
        <fullName evidence="1">RNA-directed RNA polymerase subunit P3</fullName>
    </alternativeName>
</protein>
<organism>
    <name type="scientific">Influenza A virus (strain A/Chicken/Hong Kong/31.2/2002 H5N1 genotype X1)</name>
    <dbReference type="NCBI Taxonomy" id="284169"/>
    <lineage>
        <taxon>Viruses</taxon>
        <taxon>Riboviria</taxon>
        <taxon>Orthornavirae</taxon>
        <taxon>Negarnaviricota</taxon>
        <taxon>Polyploviricotina</taxon>
        <taxon>Insthoviricetes</taxon>
        <taxon>Articulavirales</taxon>
        <taxon>Orthomyxoviridae</taxon>
        <taxon>Alphainfluenzavirus</taxon>
        <taxon>Alphainfluenzavirus influenzae</taxon>
        <taxon>Influenza A virus</taxon>
    </lineage>
</organism>
<feature type="chain" id="PRO_0000311149" description="Polymerase basic protein 2">
    <location>
        <begin position="1" status="less than"/>
        <end position="753"/>
    </location>
</feature>
<feature type="short sequence motif" description="Nuclear localization signal" evidence="1">
    <location>
        <begin position="730"/>
        <end position="733"/>
    </location>
</feature>
<feature type="site" description="Avian adaptation" evidence="1">
    <location>
        <position position="621"/>
    </location>
</feature>
<feature type="non-terminal residue">
    <location>
        <position position="1"/>
    </location>
</feature>
<sequence>LRDLMSQSRTREILTKTTVDHVAIIKKYTSGRQEKNPALRMKWMMAMKYPITADKRIMGMIPERNEQGQTLWSKTNDAGSDRVMVSPLAVTWWNRNGPTTSTVHYPKVYKTYFEKVERLKHGTFGPVHFRNQVKIRRRVDINPGHADLSAKEAQDVIMEVVFPNEVGARILTSESQLTITKEKKEELQDCKIAPLMVAYMLERELVRKTRFLPVAGGTSSVYIEVLHLTQGTCWEQMYTPGGEVRNDDVDQSLIIAARNIVRRATVSADPLASLLEMCHSTQIGGIRMVDILRQNPTEEQAVDICKAAMGLRISSSFSFGGFTFKRTSGSSVKREEEVLTGNLQTLKIRVHEGYEEFTMVGRRATAILRKATRRLIQLIVSGRDEQSIAEAIIVAMVFSQEDCMIKAVRGDLNFVNRANQRLNPMHQLLRHFQKDAKVLFQNWGIEPIDNVMGMIGILPDMTPSTEMSLRGVRVSKMGVDEYSSTERVVVSIDRFLRVRDQRGNVLLSPEEVSETQGTEKLTITYSSSMMWEINGPESVLVNTYQWIIRNWETVKIQWSQDPTMLYNKMEFEPFQSLVPKAARGQYSGFVRTLFQQMRDVLGTFDTVQIIKLLPFAAAPPEQSRMQFSSLTVNVRGSGMRILVRGNSPVFNYNKATKRLTVLGKDAGALTEDPDEGTAGVESAVLRGFLILGKEDKRYGPALSINELSNLAKGEKANVLIGQGDVVLVMKRKRDSSILTDSQTATKRIRMAIN</sequence>
<keyword id="KW-1157">Cap snatching</keyword>
<keyword id="KW-1262">Eukaryotic host gene expression shutoff by virus</keyword>
<keyword id="KW-1191">Eukaryotic host transcription shutoff by virus</keyword>
<keyword id="KW-1190">Host gene expression shutoff by virus</keyword>
<keyword id="KW-1048">Host nucleus</keyword>
<keyword id="KW-0945">Host-virus interaction</keyword>
<keyword id="KW-1104">Inhibition of host RNA polymerase II by virus</keyword>
<keyword id="KW-0506">mRNA capping</keyword>
<keyword id="KW-0507">mRNA processing</keyword>
<keyword id="KW-1195">Viral transcription</keyword>
<keyword id="KW-0946">Virion</keyword>
<evidence type="ECO:0000255" key="1">
    <source>
        <dbReference type="HAMAP-Rule" id="MF_04062"/>
    </source>
</evidence>
<comment type="function">
    <text evidence="1">Plays an essential role in transcription initiation and cap-stealing mechanism, in which cellular capped pre-mRNAs are used to generate primers for viral transcription. Recognizes and binds the 7-methylguanosine-containing cap of the target pre-RNA which is subsequently cleaved after 10-13 nucleotides by the viral protein PA. Plays a role in the initiation of the viral genome replication and modulates the activity of the ribonucleoprotein (RNP) complex.</text>
</comment>
<comment type="subunit">
    <text evidence="1">Influenza RNA polymerase is composed of three subunits: PB1, PB2 and PA. Interacts (via N-terminus) with PB1 (via C-terminus). Interacts with nucleoprotein NP (via N-terminus).</text>
</comment>
<comment type="subcellular location">
    <subcellularLocation>
        <location evidence="1">Virion</location>
    </subcellularLocation>
    <subcellularLocation>
        <location evidence="1">Host nucleus</location>
    </subcellularLocation>
</comment>
<comment type="similarity">
    <text evidence="1">Belongs to the influenza viruses PB2 family.</text>
</comment>
<comment type="sequence caution">
    <conflict type="frameshift">
        <sequence resource="EMBL-CDS" id="AAT73562"/>
    </conflict>
</comment>